<gene>
    <name evidence="1" type="primary">ndk</name>
    <name type="ordered locus">HCH_04460</name>
</gene>
<proteinExistence type="inferred from homology"/>
<organism>
    <name type="scientific">Hahella chejuensis (strain KCTC 2396)</name>
    <dbReference type="NCBI Taxonomy" id="349521"/>
    <lineage>
        <taxon>Bacteria</taxon>
        <taxon>Pseudomonadati</taxon>
        <taxon>Pseudomonadota</taxon>
        <taxon>Gammaproteobacteria</taxon>
        <taxon>Oceanospirillales</taxon>
        <taxon>Hahellaceae</taxon>
        <taxon>Hahella</taxon>
    </lineage>
</organism>
<accession>Q2SDW0</accession>
<feature type="chain" id="PRO_0000242500" description="Nucleoside diphosphate kinase">
    <location>
        <begin position="1"/>
        <end position="142"/>
    </location>
</feature>
<feature type="active site" description="Pros-phosphohistidine intermediate" evidence="1">
    <location>
        <position position="117"/>
    </location>
</feature>
<feature type="binding site" evidence="1">
    <location>
        <position position="11"/>
    </location>
    <ligand>
        <name>ATP</name>
        <dbReference type="ChEBI" id="CHEBI:30616"/>
    </ligand>
</feature>
<feature type="binding site" evidence="1">
    <location>
        <position position="59"/>
    </location>
    <ligand>
        <name>ATP</name>
        <dbReference type="ChEBI" id="CHEBI:30616"/>
    </ligand>
</feature>
<feature type="binding site" evidence="1">
    <location>
        <position position="87"/>
    </location>
    <ligand>
        <name>ATP</name>
        <dbReference type="ChEBI" id="CHEBI:30616"/>
    </ligand>
</feature>
<feature type="binding site" evidence="1">
    <location>
        <position position="93"/>
    </location>
    <ligand>
        <name>ATP</name>
        <dbReference type="ChEBI" id="CHEBI:30616"/>
    </ligand>
</feature>
<feature type="binding site" evidence="1">
    <location>
        <position position="104"/>
    </location>
    <ligand>
        <name>ATP</name>
        <dbReference type="ChEBI" id="CHEBI:30616"/>
    </ligand>
</feature>
<feature type="binding site" evidence="1">
    <location>
        <position position="114"/>
    </location>
    <ligand>
        <name>ATP</name>
        <dbReference type="ChEBI" id="CHEBI:30616"/>
    </ligand>
</feature>
<keyword id="KW-0067">ATP-binding</keyword>
<keyword id="KW-0963">Cytoplasm</keyword>
<keyword id="KW-0418">Kinase</keyword>
<keyword id="KW-0460">Magnesium</keyword>
<keyword id="KW-0479">Metal-binding</keyword>
<keyword id="KW-0546">Nucleotide metabolism</keyword>
<keyword id="KW-0547">Nucleotide-binding</keyword>
<keyword id="KW-0597">Phosphoprotein</keyword>
<keyword id="KW-1185">Reference proteome</keyword>
<keyword id="KW-0808">Transferase</keyword>
<evidence type="ECO:0000255" key="1">
    <source>
        <dbReference type="HAMAP-Rule" id="MF_00451"/>
    </source>
</evidence>
<protein>
    <recommendedName>
        <fullName evidence="1">Nucleoside diphosphate kinase</fullName>
        <shortName evidence="1">NDK</shortName>
        <shortName evidence="1">NDP kinase</shortName>
        <ecNumber evidence="1">2.7.4.6</ecNumber>
    </recommendedName>
    <alternativeName>
        <fullName evidence="1">Nucleoside-2-P kinase</fullName>
    </alternativeName>
</protein>
<sequence length="142" mass="15389">MAVERTLSIIKPDAVAKNVIGEIYSRFEKAGLRIVAAKMLHLSQEQAEGFYAEHKERGFFPDLVAFMTSGPVVVQALEGENAIALNRQLMGATNPKEAEPGTIRADFASSIDANAVHGSDSAASAEREVAYFFSENEICPRS</sequence>
<dbReference type="EC" id="2.7.4.6" evidence="1"/>
<dbReference type="EMBL" id="CP000155">
    <property type="protein sequence ID" value="ABC31164.1"/>
    <property type="molecule type" value="Genomic_DNA"/>
</dbReference>
<dbReference type="RefSeq" id="WP_011398231.1">
    <property type="nucleotide sequence ID" value="NC_007645.1"/>
</dbReference>
<dbReference type="SMR" id="Q2SDW0"/>
<dbReference type="STRING" id="349521.HCH_04460"/>
<dbReference type="KEGG" id="hch:HCH_04460"/>
<dbReference type="eggNOG" id="COG0105">
    <property type="taxonomic scope" value="Bacteria"/>
</dbReference>
<dbReference type="HOGENOM" id="CLU_060216_8_1_6"/>
<dbReference type="OrthoDB" id="9801161at2"/>
<dbReference type="Proteomes" id="UP000000238">
    <property type="component" value="Chromosome"/>
</dbReference>
<dbReference type="GO" id="GO:0005737">
    <property type="term" value="C:cytoplasm"/>
    <property type="evidence" value="ECO:0007669"/>
    <property type="project" value="UniProtKB-SubCell"/>
</dbReference>
<dbReference type="GO" id="GO:0005524">
    <property type="term" value="F:ATP binding"/>
    <property type="evidence" value="ECO:0007669"/>
    <property type="project" value="UniProtKB-UniRule"/>
</dbReference>
<dbReference type="GO" id="GO:0046872">
    <property type="term" value="F:metal ion binding"/>
    <property type="evidence" value="ECO:0007669"/>
    <property type="project" value="UniProtKB-KW"/>
</dbReference>
<dbReference type="GO" id="GO:0004550">
    <property type="term" value="F:nucleoside diphosphate kinase activity"/>
    <property type="evidence" value="ECO:0007669"/>
    <property type="project" value="UniProtKB-UniRule"/>
</dbReference>
<dbReference type="GO" id="GO:0006241">
    <property type="term" value="P:CTP biosynthetic process"/>
    <property type="evidence" value="ECO:0007669"/>
    <property type="project" value="UniProtKB-UniRule"/>
</dbReference>
<dbReference type="GO" id="GO:0006183">
    <property type="term" value="P:GTP biosynthetic process"/>
    <property type="evidence" value="ECO:0007669"/>
    <property type="project" value="UniProtKB-UniRule"/>
</dbReference>
<dbReference type="GO" id="GO:0006228">
    <property type="term" value="P:UTP biosynthetic process"/>
    <property type="evidence" value="ECO:0007669"/>
    <property type="project" value="UniProtKB-UniRule"/>
</dbReference>
<dbReference type="CDD" id="cd04413">
    <property type="entry name" value="NDPk_I"/>
    <property type="match status" value="1"/>
</dbReference>
<dbReference type="FunFam" id="3.30.70.141:FF:000001">
    <property type="entry name" value="Nucleoside diphosphate kinase"/>
    <property type="match status" value="1"/>
</dbReference>
<dbReference type="Gene3D" id="3.30.70.141">
    <property type="entry name" value="Nucleoside diphosphate kinase-like domain"/>
    <property type="match status" value="1"/>
</dbReference>
<dbReference type="HAMAP" id="MF_00451">
    <property type="entry name" value="NDP_kinase"/>
    <property type="match status" value="1"/>
</dbReference>
<dbReference type="InterPro" id="IPR034907">
    <property type="entry name" value="NDK-like_dom"/>
</dbReference>
<dbReference type="InterPro" id="IPR036850">
    <property type="entry name" value="NDK-like_dom_sf"/>
</dbReference>
<dbReference type="InterPro" id="IPR001564">
    <property type="entry name" value="Nucleoside_diP_kinase"/>
</dbReference>
<dbReference type="NCBIfam" id="NF001908">
    <property type="entry name" value="PRK00668.1"/>
    <property type="match status" value="1"/>
</dbReference>
<dbReference type="PANTHER" id="PTHR46161">
    <property type="entry name" value="NUCLEOSIDE DIPHOSPHATE KINASE"/>
    <property type="match status" value="1"/>
</dbReference>
<dbReference type="PANTHER" id="PTHR46161:SF3">
    <property type="entry name" value="NUCLEOSIDE DIPHOSPHATE KINASE DDB_G0292928-RELATED"/>
    <property type="match status" value="1"/>
</dbReference>
<dbReference type="Pfam" id="PF00334">
    <property type="entry name" value="NDK"/>
    <property type="match status" value="1"/>
</dbReference>
<dbReference type="PRINTS" id="PR01243">
    <property type="entry name" value="NUCDPKINASE"/>
</dbReference>
<dbReference type="SMART" id="SM00562">
    <property type="entry name" value="NDK"/>
    <property type="match status" value="1"/>
</dbReference>
<dbReference type="SUPFAM" id="SSF54919">
    <property type="entry name" value="Nucleoside diphosphate kinase, NDK"/>
    <property type="match status" value="1"/>
</dbReference>
<dbReference type="PROSITE" id="PS51374">
    <property type="entry name" value="NDPK_LIKE"/>
    <property type="match status" value="1"/>
</dbReference>
<name>NDK_HAHCH</name>
<comment type="function">
    <text evidence="1">Major role in the synthesis of nucleoside triphosphates other than ATP. The ATP gamma phosphate is transferred to the NDP beta phosphate via a ping-pong mechanism, using a phosphorylated active-site intermediate.</text>
</comment>
<comment type="catalytic activity">
    <reaction evidence="1">
        <text>a 2'-deoxyribonucleoside 5'-diphosphate + ATP = a 2'-deoxyribonucleoside 5'-triphosphate + ADP</text>
        <dbReference type="Rhea" id="RHEA:44640"/>
        <dbReference type="ChEBI" id="CHEBI:30616"/>
        <dbReference type="ChEBI" id="CHEBI:61560"/>
        <dbReference type="ChEBI" id="CHEBI:73316"/>
        <dbReference type="ChEBI" id="CHEBI:456216"/>
        <dbReference type="EC" id="2.7.4.6"/>
    </reaction>
</comment>
<comment type="catalytic activity">
    <reaction evidence="1">
        <text>a ribonucleoside 5'-diphosphate + ATP = a ribonucleoside 5'-triphosphate + ADP</text>
        <dbReference type="Rhea" id="RHEA:18113"/>
        <dbReference type="ChEBI" id="CHEBI:30616"/>
        <dbReference type="ChEBI" id="CHEBI:57930"/>
        <dbReference type="ChEBI" id="CHEBI:61557"/>
        <dbReference type="ChEBI" id="CHEBI:456216"/>
        <dbReference type="EC" id="2.7.4.6"/>
    </reaction>
</comment>
<comment type="cofactor">
    <cofactor evidence="1">
        <name>Mg(2+)</name>
        <dbReference type="ChEBI" id="CHEBI:18420"/>
    </cofactor>
</comment>
<comment type="subunit">
    <text evidence="1">Homotetramer.</text>
</comment>
<comment type="subcellular location">
    <subcellularLocation>
        <location evidence="1">Cytoplasm</location>
    </subcellularLocation>
</comment>
<comment type="similarity">
    <text evidence="1">Belongs to the NDK family.</text>
</comment>
<reference key="1">
    <citation type="journal article" date="2005" name="Nucleic Acids Res.">
        <title>Genomic blueprint of Hahella chejuensis, a marine microbe producing an algicidal agent.</title>
        <authorList>
            <person name="Jeong H."/>
            <person name="Yim J.H."/>
            <person name="Lee C."/>
            <person name="Choi S.-H."/>
            <person name="Park Y.K."/>
            <person name="Yoon S.H."/>
            <person name="Hur C.-G."/>
            <person name="Kang H.-Y."/>
            <person name="Kim D."/>
            <person name="Lee H.H."/>
            <person name="Park K.H."/>
            <person name="Park S.-H."/>
            <person name="Park H.-S."/>
            <person name="Lee H.K."/>
            <person name="Oh T.K."/>
            <person name="Kim J.F."/>
        </authorList>
    </citation>
    <scope>NUCLEOTIDE SEQUENCE [LARGE SCALE GENOMIC DNA]</scope>
    <source>
        <strain>KCTC 2396</strain>
    </source>
</reference>